<comment type="function">
    <text evidence="1">Negative regulator of the mitotic exit network (MEN), required for multiple cell cycle checkpoints. Required for daughter cell separation and chromosome stability. Involved in copper sensitivity.</text>
</comment>
<comment type="subcellular location">
    <subcellularLocation>
        <location evidence="2">Cytoplasm</location>
    </subcellularLocation>
    <subcellularLocation>
        <location evidence="2">Nucleus</location>
    </subcellularLocation>
</comment>
<comment type="similarity">
    <text evidence="4">Belongs to the AMN1 family.</text>
</comment>
<gene>
    <name type="primary">AMN1</name>
    <name type="ordered locus">CAALFM_C201950CA</name>
    <name type="ORF">CaO19.1507</name>
    <name type="ORF">CaO19.9083</name>
</gene>
<organism>
    <name type="scientific">Candida albicans (strain SC5314 / ATCC MYA-2876)</name>
    <name type="common">Yeast</name>
    <dbReference type="NCBI Taxonomy" id="237561"/>
    <lineage>
        <taxon>Eukaryota</taxon>
        <taxon>Fungi</taxon>
        <taxon>Dikarya</taxon>
        <taxon>Ascomycota</taxon>
        <taxon>Saccharomycotina</taxon>
        <taxon>Pichiomycetes</taxon>
        <taxon>Debaryomycetaceae</taxon>
        <taxon>Candida/Lodderomyces clade</taxon>
        <taxon>Candida</taxon>
    </lineage>
</organism>
<sequence>MNFHSTKPLSYDSSDNEIYNPFLVSTNEEGRVSPTIDKQQQPVLKRAKSIVSSNSLSAFFTDSKSKQQQQQQQRDRKRNKDRRNRPGRLRRSHSTNSNDQFIMNTGSFKLPDQDEFQFTMNNNSDNGFSSSTSSSDLESVPDLTDDNIDELTPETTPIKPVGNFYFNTLFDNEENTDGYYYKLNSQIKIRNELQQQQQQQQQQRLTSSSPSIFEIPEIVYKIISYVDEQNTILPQESTPIRRNPLSYKHALLIHGDKKSAQSALQKTTNQQSQQNQQPSSVISSSPLYNCLLVNKLFYKITSEIISTKFYSHNEQQLKKFIENKSHQQQNSSSPIIIQPKTFILHKLFQTKQIIFDQLIEFINFDQLSWFELYMCPKISLDKPQSQTFMKIFQSCSNNLTKLIITGSKTIDDEFLMKLGQFKCGDNLQILDLRACELITDFGIYQLSLYCRNLTFINFGRKPISNGNGNGGGNGGSGRYITDNSMIKLINNNRKLSTIGLAGCHITDKCVWEIANKLPNISRLSLNNCPKLTNSGINQIFTLTNTPNSNYFKCLSVLELRFNHQLTDLTSIIKFKRRQKFQFNIILLLELCESLMLKYRQQEFELDKLISLKIFQDISHWVNDYNDNDGDLSYNEIKHLINNNNNNNSSNNISTRGF</sequence>
<accession>Q5ALR8</accession>
<accession>A0A1D8PGI5</accession>
<evidence type="ECO:0000250" key="1"/>
<evidence type="ECO:0000250" key="2">
    <source>
        <dbReference type="UniProtKB" id="P38285"/>
    </source>
</evidence>
<evidence type="ECO:0000256" key="3">
    <source>
        <dbReference type="SAM" id="MobiDB-lite"/>
    </source>
</evidence>
<evidence type="ECO:0000305" key="4"/>
<proteinExistence type="inferred from homology"/>
<feature type="chain" id="PRO_0000277842" description="Antagonist of mitotic exit network protein 1">
    <location>
        <begin position="1"/>
        <end position="657"/>
    </location>
</feature>
<feature type="region of interest" description="Disordered" evidence="3">
    <location>
        <begin position="57"/>
        <end position="140"/>
    </location>
</feature>
<feature type="region of interest" description="Disordered" evidence="3">
    <location>
        <begin position="262"/>
        <end position="282"/>
    </location>
</feature>
<feature type="compositionally biased region" description="Basic residues" evidence="3">
    <location>
        <begin position="75"/>
        <end position="93"/>
    </location>
</feature>
<feature type="compositionally biased region" description="Polar residues" evidence="3">
    <location>
        <begin position="94"/>
        <end position="107"/>
    </location>
</feature>
<feature type="compositionally biased region" description="Low complexity" evidence="3">
    <location>
        <begin position="121"/>
        <end position="135"/>
    </location>
</feature>
<feature type="compositionally biased region" description="Low complexity" evidence="3">
    <location>
        <begin position="270"/>
        <end position="282"/>
    </location>
</feature>
<reference key="1">
    <citation type="journal article" date="2004" name="Proc. Natl. Acad. Sci. U.S.A.">
        <title>The diploid genome sequence of Candida albicans.</title>
        <authorList>
            <person name="Jones T."/>
            <person name="Federspiel N.A."/>
            <person name="Chibana H."/>
            <person name="Dungan J."/>
            <person name="Kalman S."/>
            <person name="Magee B.B."/>
            <person name="Newport G."/>
            <person name="Thorstenson Y.R."/>
            <person name="Agabian N."/>
            <person name="Magee P.T."/>
            <person name="Davis R.W."/>
            <person name="Scherer S."/>
        </authorList>
    </citation>
    <scope>NUCLEOTIDE SEQUENCE [LARGE SCALE GENOMIC DNA]</scope>
    <source>
        <strain>SC5314 / ATCC MYA-2876</strain>
    </source>
</reference>
<reference key="2">
    <citation type="journal article" date="2007" name="Genome Biol.">
        <title>Assembly of the Candida albicans genome into sixteen supercontigs aligned on the eight chromosomes.</title>
        <authorList>
            <person name="van het Hoog M."/>
            <person name="Rast T.J."/>
            <person name="Martchenko M."/>
            <person name="Grindle S."/>
            <person name="Dignard D."/>
            <person name="Hogues H."/>
            <person name="Cuomo C."/>
            <person name="Berriman M."/>
            <person name="Scherer S."/>
            <person name="Magee B.B."/>
            <person name="Whiteway M."/>
            <person name="Chibana H."/>
            <person name="Nantel A."/>
            <person name="Magee P.T."/>
        </authorList>
    </citation>
    <scope>GENOME REANNOTATION</scope>
    <source>
        <strain>SC5314 / ATCC MYA-2876</strain>
    </source>
</reference>
<reference key="3">
    <citation type="journal article" date="2013" name="Genome Biol.">
        <title>Assembly of a phased diploid Candida albicans genome facilitates allele-specific measurements and provides a simple model for repeat and indel structure.</title>
        <authorList>
            <person name="Muzzey D."/>
            <person name="Schwartz K."/>
            <person name="Weissman J.S."/>
            <person name="Sherlock G."/>
        </authorList>
    </citation>
    <scope>NUCLEOTIDE SEQUENCE [LARGE SCALE GENOMIC DNA]</scope>
    <scope>GENOME REANNOTATION</scope>
    <source>
        <strain>SC5314 / ATCC MYA-2876</strain>
    </source>
</reference>
<name>AMN1_CANAL</name>
<protein>
    <recommendedName>
        <fullName>Antagonist of mitotic exit network protein 1</fullName>
    </recommendedName>
</protein>
<keyword id="KW-0131">Cell cycle</keyword>
<keyword id="KW-0132">Cell division</keyword>
<keyword id="KW-0963">Cytoplasm</keyword>
<keyword id="KW-0498">Mitosis</keyword>
<keyword id="KW-0539">Nucleus</keyword>
<keyword id="KW-1185">Reference proteome</keyword>
<dbReference type="EMBL" id="CP017624">
    <property type="protein sequence ID" value="AOW27237.1"/>
    <property type="molecule type" value="Genomic_DNA"/>
</dbReference>
<dbReference type="RefSeq" id="XP_722553.2">
    <property type="nucleotide sequence ID" value="XM_717460.2"/>
</dbReference>
<dbReference type="SMR" id="Q5ALR8"/>
<dbReference type="FunCoup" id="Q5ALR8">
    <property type="interactions" value="112"/>
</dbReference>
<dbReference type="STRING" id="237561.Q5ALR8"/>
<dbReference type="EnsemblFungi" id="C2_01950C_A-T">
    <property type="protein sequence ID" value="C2_01950C_A-T-p1"/>
    <property type="gene ID" value="C2_01950C_A"/>
</dbReference>
<dbReference type="GeneID" id="3635795"/>
<dbReference type="KEGG" id="cal:CAALFM_C201950CA"/>
<dbReference type="CGD" id="CAL0000192306">
    <property type="gene designation" value="AMN1"/>
</dbReference>
<dbReference type="VEuPathDB" id="FungiDB:C2_01950C_A"/>
<dbReference type="eggNOG" id="KOG1947">
    <property type="taxonomic scope" value="Eukaryota"/>
</dbReference>
<dbReference type="HOGENOM" id="CLU_031725_0_0_1"/>
<dbReference type="InParanoid" id="Q5ALR8"/>
<dbReference type="OrthoDB" id="550575at2759"/>
<dbReference type="PRO" id="PR:Q5ALR8"/>
<dbReference type="Proteomes" id="UP000000559">
    <property type="component" value="Chromosome 2"/>
</dbReference>
<dbReference type="GO" id="GO:0005737">
    <property type="term" value="C:cytoplasm"/>
    <property type="evidence" value="ECO:0000318"/>
    <property type="project" value="GO_Central"/>
</dbReference>
<dbReference type="GO" id="GO:0005634">
    <property type="term" value="C:nucleus"/>
    <property type="evidence" value="ECO:0007669"/>
    <property type="project" value="UniProtKB-SubCell"/>
</dbReference>
<dbReference type="GO" id="GO:0051301">
    <property type="term" value="P:cell division"/>
    <property type="evidence" value="ECO:0007669"/>
    <property type="project" value="UniProtKB-KW"/>
</dbReference>
<dbReference type="CDD" id="cd09293">
    <property type="entry name" value="AMN1"/>
    <property type="match status" value="1"/>
</dbReference>
<dbReference type="Gene3D" id="3.80.10.10">
    <property type="entry name" value="Ribonuclease Inhibitor"/>
    <property type="match status" value="2"/>
</dbReference>
<dbReference type="InterPro" id="IPR006553">
    <property type="entry name" value="Leu-rich_rpt_Cys-con_subtyp"/>
</dbReference>
<dbReference type="InterPro" id="IPR032675">
    <property type="entry name" value="LRR_dom_sf"/>
</dbReference>
<dbReference type="PANTHER" id="PTHR13318:SF95">
    <property type="entry name" value="F-BOX PROTEIN YLR352W"/>
    <property type="match status" value="1"/>
</dbReference>
<dbReference type="PANTHER" id="PTHR13318">
    <property type="entry name" value="PARTNER OF PAIRED, ISOFORM B-RELATED"/>
    <property type="match status" value="1"/>
</dbReference>
<dbReference type="SMART" id="SM00367">
    <property type="entry name" value="LRR_CC"/>
    <property type="match status" value="3"/>
</dbReference>
<dbReference type="SUPFAM" id="SSF52047">
    <property type="entry name" value="RNI-like"/>
    <property type="match status" value="1"/>
</dbReference>